<sequence length="496" mass="55716">MDRMKKIKRQLSMTLRGGRGIDKTNGAPEQIGLDESGGGGGSDPGEAPTRAAPGELRSARGPLSSAPEIVHEDLKMGSDGESDQASATSSDEVQSPVRVRMRNHPPRKISTEDINKRLSLPADIRLPEGYLEKLTLNSPIFDKPLSRRLRRVSLSEIGFGKLETYIKLDKLGEGTYATVYKGKSKLTDNLVALKEIRLEHEEGAPCTAIREVSLLKDLKHANIVTLHDIIHTEKSLTLVFEYLDKDLKQYLDDCGNIINMHNVKLFLFQLLRGLAYCHRQKVLHRDLKPQNLLINERGELKLADFGLARAKSIPTKTYSNEVVTLWYRPPDILLGSTDYSTQIDMWGVGCIFYEMATGRPLFPGSTVEEQLHFIFRILGTPTEETWPGILSNEEFKTYNYPKYRAEALLSHAPRLDSDGADLLTKLLQFEGRNRISAEDAMKHPFFLSLGERIHKLPDTTSIFALKEIQLQKEASLRSSSMPDSGRPAFRVVDTEF</sequence>
<reference key="1">
    <citation type="journal article" date="1992" name="EMBO J.">
        <title>A family of human cdc2-related protein kinases.</title>
        <authorList>
            <person name="Meyerson M."/>
            <person name="Enders G.H."/>
            <person name="Wu C.-L."/>
            <person name="Su L.-K."/>
            <person name="Gorka C."/>
            <person name="Nelson C."/>
            <person name="Harlow E."/>
            <person name="Tsai L.-H."/>
        </authorList>
    </citation>
    <scope>NUCLEOTIDE SEQUENCE [MRNA] (ISOFORM 1)</scope>
    <source>
        <tissue>Fetal brain</tissue>
    </source>
</reference>
<reference key="2">
    <citation type="submission" date="2003-05" db="EMBL/GenBank/DDBJ databases">
        <title>Cloning of human full-length CDSs in BD Creator(TM) system donor vector.</title>
        <authorList>
            <person name="Kalnine N."/>
            <person name="Chen X."/>
            <person name="Rolfs A."/>
            <person name="Halleck A."/>
            <person name="Hines L."/>
            <person name="Eisenstein S."/>
            <person name="Koundinya M."/>
            <person name="Raphael J."/>
            <person name="Moreira D."/>
            <person name="Kelley T."/>
            <person name="LaBaer J."/>
            <person name="Lin Y."/>
            <person name="Phelan M."/>
            <person name="Farmer A."/>
        </authorList>
    </citation>
    <scope>NUCLEOTIDE SEQUENCE [LARGE SCALE MRNA] (ISOFORM 1)</scope>
</reference>
<reference key="3">
    <citation type="journal article" date="2004" name="Nat. Genet.">
        <title>Complete sequencing and characterization of 21,243 full-length human cDNAs.</title>
        <authorList>
            <person name="Ota T."/>
            <person name="Suzuki Y."/>
            <person name="Nishikawa T."/>
            <person name="Otsuki T."/>
            <person name="Sugiyama T."/>
            <person name="Irie R."/>
            <person name="Wakamatsu A."/>
            <person name="Hayashi K."/>
            <person name="Sato H."/>
            <person name="Nagai K."/>
            <person name="Kimura K."/>
            <person name="Makita H."/>
            <person name="Sekine M."/>
            <person name="Obayashi M."/>
            <person name="Nishi T."/>
            <person name="Shibahara T."/>
            <person name="Tanaka T."/>
            <person name="Ishii S."/>
            <person name="Yamamoto J."/>
            <person name="Saito K."/>
            <person name="Kawai Y."/>
            <person name="Isono Y."/>
            <person name="Nakamura Y."/>
            <person name="Nagahari K."/>
            <person name="Murakami K."/>
            <person name="Yasuda T."/>
            <person name="Iwayanagi T."/>
            <person name="Wagatsuma M."/>
            <person name="Shiratori A."/>
            <person name="Sudo H."/>
            <person name="Hosoiri T."/>
            <person name="Kaku Y."/>
            <person name="Kodaira H."/>
            <person name="Kondo H."/>
            <person name="Sugawara M."/>
            <person name="Takahashi M."/>
            <person name="Kanda K."/>
            <person name="Yokoi T."/>
            <person name="Furuya T."/>
            <person name="Kikkawa E."/>
            <person name="Omura Y."/>
            <person name="Abe K."/>
            <person name="Kamihara K."/>
            <person name="Katsuta N."/>
            <person name="Sato K."/>
            <person name="Tanikawa M."/>
            <person name="Yamazaki M."/>
            <person name="Ninomiya K."/>
            <person name="Ishibashi T."/>
            <person name="Yamashita H."/>
            <person name="Murakawa K."/>
            <person name="Fujimori K."/>
            <person name="Tanai H."/>
            <person name="Kimata M."/>
            <person name="Watanabe M."/>
            <person name="Hiraoka S."/>
            <person name="Chiba Y."/>
            <person name="Ishida S."/>
            <person name="Ono Y."/>
            <person name="Takiguchi S."/>
            <person name="Watanabe S."/>
            <person name="Yosida M."/>
            <person name="Hotuta T."/>
            <person name="Kusano J."/>
            <person name="Kanehori K."/>
            <person name="Takahashi-Fujii A."/>
            <person name="Hara H."/>
            <person name="Tanase T.-O."/>
            <person name="Nomura Y."/>
            <person name="Togiya S."/>
            <person name="Komai F."/>
            <person name="Hara R."/>
            <person name="Takeuchi K."/>
            <person name="Arita M."/>
            <person name="Imose N."/>
            <person name="Musashino K."/>
            <person name="Yuuki H."/>
            <person name="Oshima A."/>
            <person name="Sasaki N."/>
            <person name="Aotsuka S."/>
            <person name="Yoshikawa Y."/>
            <person name="Matsunawa H."/>
            <person name="Ichihara T."/>
            <person name="Shiohata N."/>
            <person name="Sano S."/>
            <person name="Moriya S."/>
            <person name="Momiyama H."/>
            <person name="Satoh N."/>
            <person name="Takami S."/>
            <person name="Terashima Y."/>
            <person name="Suzuki O."/>
            <person name="Nakagawa S."/>
            <person name="Senoh A."/>
            <person name="Mizoguchi H."/>
            <person name="Goto Y."/>
            <person name="Shimizu F."/>
            <person name="Wakebe H."/>
            <person name="Hishigaki H."/>
            <person name="Watanabe T."/>
            <person name="Sugiyama A."/>
            <person name="Takemoto M."/>
            <person name="Kawakami B."/>
            <person name="Yamazaki M."/>
            <person name="Watanabe K."/>
            <person name="Kumagai A."/>
            <person name="Itakura S."/>
            <person name="Fukuzumi Y."/>
            <person name="Fujimori Y."/>
            <person name="Komiyama M."/>
            <person name="Tashiro H."/>
            <person name="Tanigami A."/>
            <person name="Fujiwara T."/>
            <person name="Ono T."/>
            <person name="Yamada K."/>
            <person name="Fujii Y."/>
            <person name="Ozaki K."/>
            <person name="Hirao M."/>
            <person name="Ohmori Y."/>
            <person name="Kawabata A."/>
            <person name="Hikiji T."/>
            <person name="Kobatake N."/>
            <person name="Inagaki H."/>
            <person name="Ikema Y."/>
            <person name="Okamoto S."/>
            <person name="Okitani R."/>
            <person name="Kawakami T."/>
            <person name="Noguchi S."/>
            <person name="Itoh T."/>
            <person name="Shigeta K."/>
            <person name="Senba T."/>
            <person name="Matsumura K."/>
            <person name="Nakajima Y."/>
            <person name="Mizuno T."/>
            <person name="Morinaga M."/>
            <person name="Sasaki M."/>
            <person name="Togashi T."/>
            <person name="Oyama M."/>
            <person name="Hata H."/>
            <person name="Watanabe M."/>
            <person name="Komatsu T."/>
            <person name="Mizushima-Sugano J."/>
            <person name="Satoh T."/>
            <person name="Shirai Y."/>
            <person name="Takahashi Y."/>
            <person name="Nakagawa K."/>
            <person name="Okumura K."/>
            <person name="Nagase T."/>
            <person name="Nomura N."/>
            <person name="Kikuchi H."/>
            <person name="Masuho Y."/>
            <person name="Yamashita R."/>
            <person name="Nakai K."/>
            <person name="Yada T."/>
            <person name="Nakamura Y."/>
            <person name="Ohara O."/>
            <person name="Isogai T."/>
            <person name="Sugano S."/>
        </authorList>
    </citation>
    <scope>NUCLEOTIDE SEQUENCE [LARGE SCALE MRNA] (ISOFORMS 1 AND 2)</scope>
    <source>
        <tissue>Testis</tissue>
        <tissue>Thalamus</tissue>
    </source>
</reference>
<reference key="4">
    <citation type="journal article" date="2005" name="Nature">
        <title>The DNA sequence of the human X chromosome.</title>
        <authorList>
            <person name="Ross M.T."/>
            <person name="Grafham D.V."/>
            <person name="Coffey A.J."/>
            <person name="Scherer S."/>
            <person name="McLay K."/>
            <person name="Muzny D."/>
            <person name="Platzer M."/>
            <person name="Howell G.R."/>
            <person name="Burrows C."/>
            <person name="Bird C.P."/>
            <person name="Frankish A."/>
            <person name="Lovell F.L."/>
            <person name="Howe K.L."/>
            <person name="Ashurst J.L."/>
            <person name="Fulton R.S."/>
            <person name="Sudbrak R."/>
            <person name="Wen G."/>
            <person name="Jones M.C."/>
            <person name="Hurles M.E."/>
            <person name="Andrews T.D."/>
            <person name="Scott C.E."/>
            <person name="Searle S."/>
            <person name="Ramser J."/>
            <person name="Whittaker A."/>
            <person name="Deadman R."/>
            <person name="Carter N.P."/>
            <person name="Hunt S.E."/>
            <person name="Chen R."/>
            <person name="Cree A."/>
            <person name="Gunaratne P."/>
            <person name="Havlak P."/>
            <person name="Hodgson A."/>
            <person name="Metzker M.L."/>
            <person name="Richards S."/>
            <person name="Scott G."/>
            <person name="Steffen D."/>
            <person name="Sodergren E."/>
            <person name="Wheeler D.A."/>
            <person name="Worley K.C."/>
            <person name="Ainscough R."/>
            <person name="Ambrose K.D."/>
            <person name="Ansari-Lari M.A."/>
            <person name="Aradhya S."/>
            <person name="Ashwell R.I."/>
            <person name="Babbage A.K."/>
            <person name="Bagguley C.L."/>
            <person name="Ballabio A."/>
            <person name="Banerjee R."/>
            <person name="Barker G.E."/>
            <person name="Barlow K.F."/>
            <person name="Barrett I.P."/>
            <person name="Bates K.N."/>
            <person name="Beare D.M."/>
            <person name="Beasley H."/>
            <person name="Beasley O."/>
            <person name="Beck A."/>
            <person name="Bethel G."/>
            <person name="Blechschmidt K."/>
            <person name="Brady N."/>
            <person name="Bray-Allen S."/>
            <person name="Bridgeman A.M."/>
            <person name="Brown A.J."/>
            <person name="Brown M.J."/>
            <person name="Bonnin D."/>
            <person name="Bruford E.A."/>
            <person name="Buhay C."/>
            <person name="Burch P."/>
            <person name="Burford D."/>
            <person name="Burgess J."/>
            <person name="Burrill W."/>
            <person name="Burton J."/>
            <person name="Bye J.M."/>
            <person name="Carder C."/>
            <person name="Carrel L."/>
            <person name="Chako J."/>
            <person name="Chapman J.C."/>
            <person name="Chavez D."/>
            <person name="Chen E."/>
            <person name="Chen G."/>
            <person name="Chen Y."/>
            <person name="Chen Z."/>
            <person name="Chinault C."/>
            <person name="Ciccodicola A."/>
            <person name="Clark S.Y."/>
            <person name="Clarke G."/>
            <person name="Clee C.M."/>
            <person name="Clegg S."/>
            <person name="Clerc-Blankenburg K."/>
            <person name="Clifford K."/>
            <person name="Cobley V."/>
            <person name="Cole C.G."/>
            <person name="Conquer J.S."/>
            <person name="Corby N."/>
            <person name="Connor R.E."/>
            <person name="David R."/>
            <person name="Davies J."/>
            <person name="Davis C."/>
            <person name="Davis J."/>
            <person name="Delgado O."/>
            <person name="Deshazo D."/>
            <person name="Dhami P."/>
            <person name="Ding Y."/>
            <person name="Dinh H."/>
            <person name="Dodsworth S."/>
            <person name="Draper H."/>
            <person name="Dugan-Rocha S."/>
            <person name="Dunham A."/>
            <person name="Dunn M."/>
            <person name="Durbin K.J."/>
            <person name="Dutta I."/>
            <person name="Eades T."/>
            <person name="Ellwood M."/>
            <person name="Emery-Cohen A."/>
            <person name="Errington H."/>
            <person name="Evans K.L."/>
            <person name="Faulkner L."/>
            <person name="Francis F."/>
            <person name="Frankland J."/>
            <person name="Fraser A.E."/>
            <person name="Galgoczy P."/>
            <person name="Gilbert J."/>
            <person name="Gill R."/>
            <person name="Gloeckner G."/>
            <person name="Gregory S.G."/>
            <person name="Gribble S."/>
            <person name="Griffiths C."/>
            <person name="Grocock R."/>
            <person name="Gu Y."/>
            <person name="Gwilliam R."/>
            <person name="Hamilton C."/>
            <person name="Hart E.A."/>
            <person name="Hawes A."/>
            <person name="Heath P.D."/>
            <person name="Heitmann K."/>
            <person name="Hennig S."/>
            <person name="Hernandez J."/>
            <person name="Hinzmann B."/>
            <person name="Ho S."/>
            <person name="Hoffs M."/>
            <person name="Howden P.J."/>
            <person name="Huckle E.J."/>
            <person name="Hume J."/>
            <person name="Hunt P.J."/>
            <person name="Hunt A.R."/>
            <person name="Isherwood J."/>
            <person name="Jacob L."/>
            <person name="Johnson D."/>
            <person name="Jones S."/>
            <person name="de Jong P.J."/>
            <person name="Joseph S.S."/>
            <person name="Keenan S."/>
            <person name="Kelly S."/>
            <person name="Kershaw J.K."/>
            <person name="Khan Z."/>
            <person name="Kioschis P."/>
            <person name="Klages S."/>
            <person name="Knights A.J."/>
            <person name="Kosiura A."/>
            <person name="Kovar-Smith C."/>
            <person name="Laird G.K."/>
            <person name="Langford C."/>
            <person name="Lawlor S."/>
            <person name="Leversha M."/>
            <person name="Lewis L."/>
            <person name="Liu W."/>
            <person name="Lloyd C."/>
            <person name="Lloyd D.M."/>
            <person name="Loulseged H."/>
            <person name="Loveland J.E."/>
            <person name="Lovell J.D."/>
            <person name="Lozado R."/>
            <person name="Lu J."/>
            <person name="Lyne R."/>
            <person name="Ma J."/>
            <person name="Maheshwari M."/>
            <person name="Matthews L.H."/>
            <person name="McDowall J."/>
            <person name="McLaren S."/>
            <person name="McMurray A."/>
            <person name="Meidl P."/>
            <person name="Meitinger T."/>
            <person name="Milne S."/>
            <person name="Miner G."/>
            <person name="Mistry S.L."/>
            <person name="Morgan M."/>
            <person name="Morris S."/>
            <person name="Mueller I."/>
            <person name="Mullikin J.C."/>
            <person name="Nguyen N."/>
            <person name="Nordsiek G."/>
            <person name="Nyakatura G."/>
            <person name="O'dell C.N."/>
            <person name="Okwuonu G."/>
            <person name="Palmer S."/>
            <person name="Pandian R."/>
            <person name="Parker D."/>
            <person name="Parrish J."/>
            <person name="Pasternak S."/>
            <person name="Patel D."/>
            <person name="Pearce A.V."/>
            <person name="Pearson D.M."/>
            <person name="Pelan S.E."/>
            <person name="Perez L."/>
            <person name="Porter K.M."/>
            <person name="Ramsey Y."/>
            <person name="Reichwald K."/>
            <person name="Rhodes S."/>
            <person name="Ridler K.A."/>
            <person name="Schlessinger D."/>
            <person name="Schueler M.G."/>
            <person name="Sehra H.K."/>
            <person name="Shaw-Smith C."/>
            <person name="Shen H."/>
            <person name="Sheridan E.M."/>
            <person name="Shownkeen R."/>
            <person name="Skuce C.D."/>
            <person name="Smith M.L."/>
            <person name="Sotheran E.C."/>
            <person name="Steingruber H.E."/>
            <person name="Steward C.A."/>
            <person name="Storey R."/>
            <person name="Swann R.M."/>
            <person name="Swarbreck D."/>
            <person name="Tabor P.E."/>
            <person name="Taudien S."/>
            <person name="Taylor T."/>
            <person name="Teague B."/>
            <person name="Thomas K."/>
            <person name="Thorpe A."/>
            <person name="Timms K."/>
            <person name="Tracey A."/>
            <person name="Trevanion S."/>
            <person name="Tromans A.C."/>
            <person name="d'Urso M."/>
            <person name="Verduzco D."/>
            <person name="Villasana D."/>
            <person name="Waldron L."/>
            <person name="Wall M."/>
            <person name="Wang Q."/>
            <person name="Warren J."/>
            <person name="Warry G.L."/>
            <person name="Wei X."/>
            <person name="West A."/>
            <person name="Whitehead S.L."/>
            <person name="Whiteley M.N."/>
            <person name="Wilkinson J.E."/>
            <person name="Willey D.L."/>
            <person name="Williams G."/>
            <person name="Williams L."/>
            <person name="Williamson A."/>
            <person name="Williamson H."/>
            <person name="Wilming L."/>
            <person name="Woodmansey R.L."/>
            <person name="Wray P.W."/>
            <person name="Yen J."/>
            <person name="Zhang J."/>
            <person name="Zhou J."/>
            <person name="Zoghbi H."/>
            <person name="Zorilla S."/>
            <person name="Buck D."/>
            <person name="Reinhardt R."/>
            <person name="Poustka A."/>
            <person name="Rosenthal A."/>
            <person name="Lehrach H."/>
            <person name="Meindl A."/>
            <person name="Minx P.J."/>
            <person name="Hillier L.W."/>
            <person name="Willard H.F."/>
            <person name="Wilson R.K."/>
            <person name="Waterston R.H."/>
            <person name="Rice C.M."/>
            <person name="Vaudin M."/>
            <person name="Coulson A."/>
            <person name="Nelson D.L."/>
            <person name="Weinstock G."/>
            <person name="Sulston J.E."/>
            <person name="Durbin R.M."/>
            <person name="Hubbard T."/>
            <person name="Gibbs R.A."/>
            <person name="Beck S."/>
            <person name="Rogers J."/>
            <person name="Bentley D.R."/>
        </authorList>
    </citation>
    <scope>NUCLEOTIDE SEQUENCE [LARGE SCALE GENOMIC DNA]</scope>
</reference>
<reference key="5">
    <citation type="submission" date="2005-07" db="EMBL/GenBank/DDBJ databases">
        <authorList>
            <person name="Mural R.J."/>
            <person name="Istrail S."/>
            <person name="Sutton G.G."/>
            <person name="Florea L."/>
            <person name="Halpern A.L."/>
            <person name="Mobarry C.M."/>
            <person name="Lippert R."/>
            <person name="Walenz B."/>
            <person name="Shatkay H."/>
            <person name="Dew I."/>
            <person name="Miller J.R."/>
            <person name="Flanigan M.J."/>
            <person name="Edwards N.J."/>
            <person name="Bolanos R."/>
            <person name="Fasulo D."/>
            <person name="Halldorsson B.V."/>
            <person name="Hannenhalli S."/>
            <person name="Turner R."/>
            <person name="Yooseph S."/>
            <person name="Lu F."/>
            <person name="Nusskern D.R."/>
            <person name="Shue B.C."/>
            <person name="Zheng X.H."/>
            <person name="Zhong F."/>
            <person name="Delcher A.L."/>
            <person name="Huson D.H."/>
            <person name="Kravitz S.A."/>
            <person name="Mouchard L."/>
            <person name="Reinert K."/>
            <person name="Remington K.A."/>
            <person name="Clark A.G."/>
            <person name="Waterman M.S."/>
            <person name="Eichler E.E."/>
            <person name="Adams M.D."/>
            <person name="Hunkapiller M.W."/>
            <person name="Myers E.W."/>
            <person name="Venter J.C."/>
        </authorList>
    </citation>
    <scope>NUCLEOTIDE SEQUENCE [LARGE SCALE GENOMIC DNA]</scope>
</reference>
<reference key="6">
    <citation type="journal article" date="2004" name="Genome Res.">
        <title>The status, quality, and expansion of the NIH full-length cDNA project: the Mammalian Gene Collection (MGC).</title>
        <authorList>
            <consortium name="The MGC Project Team"/>
        </authorList>
    </citation>
    <scope>NUCLEOTIDE SEQUENCE [LARGE SCALE MRNA] (ISOFORM 3)</scope>
    <source>
        <tissue>Brain</tissue>
        <tissue>Placenta</tissue>
    </source>
</reference>
<reference key="7">
    <citation type="journal article" date="2006" name="Cell">
        <title>Global, in vivo, and site-specific phosphorylation dynamics in signaling networks.</title>
        <authorList>
            <person name="Olsen J.V."/>
            <person name="Blagoev B."/>
            <person name="Gnad F."/>
            <person name="Macek B."/>
            <person name="Kumar C."/>
            <person name="Mortensen P."/>
            <person name="Mann M."/>
        </authorList>
    </citation>
    <scope>IDENTIFICATION BY MASS SPECTROMETRY [LARGE SCALE ANALYSIS]</scope>
    <source>
        <tissue>Cervix carcinoma</tissue>
    </source>
</reference>
<reference key="8">
    <citation type="journal article" date="2008" name="Mol. Cell">
        <title>Kinase-selective enrichment enables quantitative phosphoproteomics of the kinome across the cell cycle.</title>
        <authorList>
            <person name="Daub H."/>
            <person name="Olsen J.V."/>
            <person name="Bairlein M."/>
            <person name="Gnad F."/>
            <person name="Oppermann F.S."/>
            <person name="Korner R."/>
            <person name="Greff Z."/>
            <person name="Keri G."/>
            <person name="Stemmann O."/>
            <person name="Mann M."/>
        </authorList>
    </citation>
    <scope>PHOSPHORYLATION [LARGE SCALE ANALYSIS] AT SER-78; SER-82; SER-95; SER-119 AND SER-138</scope>
    <scope>IDENTIFICATION BY MASS SPECTROMETRY [LARGE SCALE ANALYSIS]</scope>
    <source>
        <tissue>Cervix carcinoma</tissue>
    </source>
</reference>
<reference key="9">
    <citation type="journal article" date="2008" name="Proc. Natl. Acad. Sci. U.S.A.">
        <title>A quantitative atlas of mitotic phosphorylation.</title>
        <authorList>
            <person name="Dephoure N."/>
            <person name="Zhou C."/>
            <person name="Villen J."/>
            <person name="Beausoleil S.A."/>
            <person name="Bakalarski C.E."/>
            <person name="Elledge S.J."/>
            <person name="Gygi S.P."/>
        </authorList>
    </citation>
    <scope>PHOSPHORYLATION [LARGE SCALE ANALYSIS] AT SER-138; SER-153 AND SER-155</scope>
    <scope>IDENTIFICATION BY MASS SPECTROMETRY [LARGE SCALE ANALYSIS]</scope>
    <source>
        <tissue>Cervix carcinoma</tissue>
    </source>
</reference>
<reference key="10">
    <citation type="journal article" date="2009" name="Anal. Chem.">
        <title>Lys-N and trypsin cover complementary parts of the phosphoproteome in a refined SCX-based approach.</title>
        <authorList>
            <person name="Gauci S."/>
            <person name="Helbig A.O."/>
            <person name="Slijper M."/>
            <person name="Krijgsveld J."/>
            <person name="Heck A.J."/>
            <person name="Mohammed S."/>
        </authorList>
    </citation>
    <scope>IDENTIFICATION BY MASS SPECTROMETRY [LARGE SCALE ANALYSIS]</scope>
</reference>
<reference key="11">
    <citation type="journal article" date="2009" name="Mol. Cell. Proteomics">
        <title>Large-scale proteomics analysis of the human kinome.</title>
        <authorList>
            <person name="Oppermann F.S."/>
            <person name="Gnad F."/>
            <person name="Olsen J.V."/>
            <person name="Hornberger R."/>
            <person name="Greff Z."/>
            <person name="Keri G."/>
            <person name="Mann M."/>
            <person name="Daub H."/>
        </authorList>
    </citation>
    <scope>PHOSPHORYLATION [LARGE SCALE ANALYSIS] AT SER-42; SER-78; SER-82; SER-95; SER-119 AND SER-138</scope>
    <scope>IDENTIFICATION BY MASS SPECTROMETRY [LARGE SCALE ANALYSIS]</scope>
</reference>
<reference key="12">
    <citation type="journal article" date="2010" name="Sci. Signal.">
        <title>Quantitative phosphoproteomics reveals widespread full phosphorylation site occupancy during mitosis.</title>
        <authorList>
            <person name="Olsen J.V."/>
            <person name="Vermeulen M."/>
            <person name="Santamaria A."/>
            <person name="Kumar C."/>
            <person name="Miller M.L."/>
            <person name="Jensen L.J."/>
            <person name="Gnad F."/>
            <person name="Cox J."/>
            <person name="Jensen T.S."/>
            <person name="Nigg E.A."/>
            <person name="Brunak S."/>
            <person name="Mann M."/>
        </authorList>
    </citation>
    <scope>PHOSPHORYLATION [LARGE SCALE ANALYSIS] AT SER-153</scope>
    <scope>IDENTIFICATION BY MASS SPECTROMETRY [LARGE SCALE ANALYSIS]</scope>
    <source>
        <tissue>Cervix carcinoma</tissue>
    </source>
</reference>
<reference key="13">
    <citation type="journal article" date="2011" name="Sci. Signal.">
        <title>System-wide temporal characterization of the proteome and phosphoproteome of human embryonic stem cell differentiation.</title>
        <authorList>
            <person name="Rigbolt K.T."/>
            <person name="Prokhorova T.A."/>
            <person name="Akimov V."/>
            <person name="Henningsen J."/>
            <person name="Johansen P.T."/>
            <person name="Kratchmarova I."/>
            <person name="Kassem M."/>
            <person name="Mann M."/>
            <person name="Olsen J.V."/>
            <person name="Blagoev B."/>
        </authorList>
    </citation>
    <scope>PHOSPHORYLATION [LARGE SCALE ANALYSIS] AT SER-119 AND SER-153</scope>
    <scope>IDENTIFICATION BY MASS SPECTROMETRY [LARGE SCALE ANALYSIS]</scope>
</reference>
<reference key="14">
    <citation type="journal article" date="2012" name="Cell. Signal.">
        <title>Analysis of substrate specificity and cyclin Y binding of PCTAIRE-1 kinase.</title>
        <authorList>
            <person name="Shehata S.N."/>
            <person name="Hunter R.W."/>
            <person name="Ohta E."/>
            <person name="Peggie M.W."/>
            <person name="Lou H.J."/>
            <person name="Sicheri F."/>
            <person name="Zeqiraj E."/>
            <person name="Turk B.E."/>
            <person name="Sakamoto K."/>
        </authorList>
    </citation>
    <scope>FUNCTION</scope>
    <scope>CATALYTIC ACTIVITY</scope>
    <scope>INTERACTION WITH CCNY</scope>
</reference>
<reference key="15">
    <citation type="journal article" date="2012" name="J. Biol. Chem.">
        <title>Brain-selective kinase 2 (BRSK2) phosphorylation on PCTAIRE1 negatively regulates glucose-stimulated insulin secretion in pancreatic beta-cells.</title>
        <authorList>
            <person name="Chen X.Y."/>
            <person name="Gu X.T."/>
            <person name="Saiyin H."/>
            <person name="Wan B."/>
            <person name="Zhang Y.J."/>
            <person name="Li J."/>
            <person name="Wang Y.L."/>
            <person name="Gao R."/>
            <person name="Wang Y.F."/>
            <person name="Dong W.P."/>
            <person name="Najjar S.M."/>
            <person name="Zhang C.Y."/>
            <person name="Ding H.F."/>
            <person name="Liu J.O."/>
            <person name="Yu L."/>
        </authorList>
    </citation>
    <scope>FUNCTION</scope>
    <scope>CATALYTIC ACTIVITY</scope>
    <scope>INTERACTION WITH BRSK2</scope>
    <scope>SUBCELLULAR LOCATION</scope>
    <scope>MUTAGENESIS OF SER-12; SER-153 AND LYS-194</scope>
    <scope>PHOSPHORYLATION AT SER-12</scope>
    <scope>TISSUE SPECIFICITY</scope>
</reference>
<reference key="16">
    <citation type="journal article" date="2012" name="Mol. Cell. Biol.">
        <title>Cyclin-dependent kinase 16/PCTAIRE kinase 1 is activated by cyclin Y and is essential for spermatogenesis.</title>
        <authorList>
            <person name="Mikolcevic P."/>
            <person name="Sigl R."/>
            <person name="Rauch V."/>
            <person name="Hess M.W."/>
            <person name="Pfaller K."/>
            <person name="Barisic M."/>
            <person name="Pelliniemi L.J."/>
            <person name="Boesl M."/>
            <person name="Geley S."/>
        </authorList>
    </citation>
    <scope>FUNCTION</scope>
    <scope>CATALYTIC ACTIVITY</scope>
    <scope>SUBCELLULAR LOCATION</scope>
    <scope>INTERACTION WITH CCNY AND</scope>
    <scope>MUTAGENESIS OF SER-119; SER-153 AND LYS-194</scope>
</reference>
<reference key="17">
    <citation type="journal article" date="2013" name="J. Proteome Res.">
        <title>Toward a comprehensive characterization of a human cancer cell phosphoproteome.</title>
        <authorList>
            <person name="Zhou H."/>
            <person name="Di Palma S."/>
            <person name="Preisinger C."/>
            <person name="Peng M."/>
            <person name="Polat A.N."/>
            <person name="Heck A.J."/>
            <person name="Mohammed S."/>
        </authorList>
    </citation>
    <scope>PHOSPHORYLATION [LARGE SCALE ANALYSIS] AT SER-12; SER-65; SER-95; SER-138; SER-153 AND SER-155</scope>
    <scope>IDENTIFICATION BY MASS SPECTROMETRY [LARGE SCALE ANALYSIS]</scope>
    <source>
        <tissue>Cervix carcinoma</tissue>
        <tissue>Erythroleukemia</tissue>
    </source>
</reference>
<reference key="18">
    <citation type="submission" date="2010-06" db="PDB data bank">
        <title>Crystal structure of the PCTAIRE1 kinase in complex with indirubin e804.</title>
        <authorList>
            <consortium name="Structural genomics consortium (SGC)"/>
        </authorList>
    </citation>
    <scope>X-RAY CRYSTALLOGRAPHY (2.4 ANGSTROMS) OF 163-478</scope>
</reference>
<proteinExistence type="evidence at protein level"/>
<feature type="chain" id="PRO_0000086484" description="Cyclin-dependent kinase 16">
    <location>
        <begin position="1"/>
        <end position="496"/>
    </location>
</feature>
<feature type="domain" description="Protein kinase" evidence="4">
    <location>
        <begin position="165"/>
        <end position="446"/>
    </location>
</feature>
<feature type="region of interest" description="Disordered" evidence="6">
    <location>
        <begin position="1"/>
        <end position="97"/>
    </location>
</feature>
<feature type="compositionally biased region" description="Basic and acidic residues" evidence="6">
    <location>
        <begin position="69"/>
        <end position="78"/>
    </location>
</feature>
<feature type="compositionally biased region" description="Polar residues" evidence="6">
    <location>
        <begin position="83"/>
        <end position="93"/>
    </location>
</feature>
<feature type="active site" description="Proton acceptor" evidence="4 5">
    <location>
        <position position="286"/>
    </location>
</feature>
<feature type="binding site" evidence="4">
    <location>
        <begin position="171"/>
        <end position="179"/>
    </location>
    <ligand>
        <name>ATP</name>
        <dbReference type="ChEBI" id="CHEBI:30616"/>
    </ligand>
</feature>
<feature type="binding site" evidence="12">
    <location>
        <position position="194"/>
    </location>
    <ligand>
        <name>ATP</name>
        <dbReference type="ChEBI" id="CHEBI:30616"/>
    </ligand>
</feature>
<feature type="modified residue" description="Phosphoserine; by BRSK2" evidence="9 18">
    <location>
        <position position="12"/>
    </location>
</feature>
<feature type="modified residue" description="Phosphoserine" evidence="2">
    <location>
        <position position="36"/>
    </location>
</feature>
<feature type="modified residue" description="Phosphoserine" evidence="15">
    <location>
        <position position="42"/>
    </location>
</feature>
<feature type="modified residue" description="Phosphoserine" evidence="2">
    <location>
        <position position="64"/>
    </location>
</feature>
<feature type="modified residue" description="Phosphoserine" evidence="18">
    <location>
        <position position="65"/>
    </location>
</feature>
<feature type="modified residue" description="Phosphoserine" evidence="14 15">
    <location>
        <position position="78"/>
    </location>
</feature>
<feature type="modified residue" description="Phosphoserine" evidence="14 15">
    <location>
        <position position="82"/>
    </location>
</feature>
<feature type="modified residue" description="Phosphoserine" evidence="2">
    <location>
        <position position="89"/>
    </location>
</feature>
<feature type="modified residue" description="Phosphoserine; by CDK5" evidence="14 15 18">
    <location>
        <position position="95"/>
    </location>
</feature>
<feature type="modified residue" description="Phosphoserine" evidence="2">
    <location>
        <position position="110"/>
    </location>
</feature>
<feature type="modified residue" description="Phosphoserine" evidence="14 15 17">
    <location>
        <position position="119"/>
    </location>
</feature>
<feature type="modified residue" description="Phosphoserine" evidence="13 14 15 18">
    <location>
        <position position="138"/>
    </location>
</feature>
<feature type="modified residue" description="Phosphoserine" evidence="2">
    <location>
        <position position="146"/>
    </location>
</feature>
<feature type="modified residue" description="Phosphoserine" evidence="13 16 17 18">
    <location>
        <position position="153"/>
    </location>
</feature>
<feature type="modified residue" description="Phosphoserine" evidence="13 18">
    <location>
        <position position="155"/>
    </location>
</feature>
<feature type="modified residue" description="Phosphothreonine" evidence="2">
    <location>
        <position position="175"/>
    </location>
</feature>
<feature type="modified residue" description="Phosphothreonine" evidence="2">
    <location>
        <position position="380"/>
    </location>
</feature>
<feature type="modified residue" description="Phosphoserine" evidence="2">
    <location>
        <position position="391"/>
    </location>
</feature>
<feature type="modified residue" description="Phosphoserine" evidence="2">
    <location>
        <position position="478"/>
    </location>
</feature>
<feature type="modified residue" description="Phosphoserine" evidence="2">
    <location>
        <position position="480"/>
    </location>
</feature>
<feature type="splice variant" id="VSP_046134" description="In isoform 2." evidence="10">
    <original>M</original>
    <variation>MPLYGRARDHVTHPSILGTRPGRPMAGPITAAVPEKICNGAFCSCSGAFPLDPNNPSLGPLPSISHLNLRTQIAM</variation>
    <location>
        <position position="1"/>
    </location>
</feature>
<feature type="splice variant" id="VSP_046342" description="In isoform 3." evidence="11">
    <original>M</original>
    <variation>MQSEIAM</variation>
    <location>
        <position position="1"/>
    </location>
</feature>
<feature type="mutagenesis site" description="Abolishes phosphorylation by BRSK2. Abolishes effect on insulin secretion." evidence="9">
    <original>S</original>
    <variation>A</variation>
    <location>
        <position position="12"/>
    </location>
</feature>
<feature type="mutagenesis site" description="Strongly reduces interaction with CCNY." evidence="7">
    <original>S</original>
    <variation>A</variation>
    <location>
        <position position="119"/>
    </location>
</feature>
<feature type="mutagenesis site" description="Constitutively activated, due to loss of an inhibitory phosphorylation site. Increases interaction with CCNY." evidence="7 9">
    <original>S</original>
    <variation>A</variation>
    <location>
        <position position="153"/>
    </location>
</feature>
<feature type="mutagenesis site" description="Abolishes interaction with CCNY." evidence="7 9">
    <original>S</original>
    <variation>D</variation>
    <location>
        <position position="153"/>
    </location>
</feature>
<feature type="mutagenesis site" description="Loss of kinase activity. Abolishes effect on insulin secretion." evidence="7 9">
    <original>K</original>
    <variation>A</variation>
    <location>
        <position position="194"/>
    </location>
</feature>
<feature type="mutagenesis site" description="Loss of kinase activity." evidence="7 9">
    <original>K</original>
    <variation>R</variation>
    <location>
        <position position="194"/>
    </location>
</feature>
<feature type="sequence conflict" description="In Ref. 3; BAH13564." evidence="12" ref="3">
    <original>N</original>
    <variation>D</variation>
    <location>
        <position position="25"/>
    </location>
</feature>
<feature type="strand" evidence="20">
    <location>
        <begin position="165"/>
        <end position="173"/>
    </location>
</feature>
<feature type="strand" evidence="20">
    <location>
        <begin position="175"/>
        <end position="184"/>
    </location>
</feature>
<feature type="turn" evidence="20">
    <location>
        <begin position="185"/>
        <end position="187"/>
    </location>
</feature>
<feature type="strand" evidence="20">
    <location>
        <begin position="190"/>
        <end position="197"/>
    </location>
</feature>
<feature type="helix" evidence="20">
    <location>
        <begin position="206"/>
        <end position="217"/>
    </location>
</feature>
<feature type="strand" evidence="20">
    <location>
        <begin position="226"/>
        <end position="231"/>
    </location>
</feature>
<feature type="strand" evidence="20">
    <location>
        <begin position="233"/>
        <end position="241"/>
    </location>
</feature>
<feature type="strand" evidence="20">
    <location>
        <begin position="244"/>
        <end position="246"/>
    </location>
</feature>
<feature type="helix" evidence="20">
    <location>
        <begin position="247"/>
        <end position="253"/>
    </location>
</feature>
<feature type="turn" evidence="20">
    <location>
        <begin position="254"/>
        <end position="256"/>
    </location>
</feature>
<feature type="helix" evidence="20">
    <location>
        <begin position="260"/>
        <end position="279"/>
    </location>
</feature>
<feature type="strand" evidence="19">
    <location>
        <begin position="282"/>
        <end position="286"/>
    </location>
</feature>
<feature type="helix" evidence="20">
    <location>
        <begin position="289"/>
        <end position="291"/>
    </location>
</feature>
<feature type="strand" evidence="20">
    <location>
        <begin position="292"/>
        <end position="294"/>
    </location>
</feature>
<feature type="strand" evidence="20">
    <location>
        <begin position="300"/>
        <end position="302"/>
    </location>
</feature>
<feature type="strand" evidence="19">
    <location>
        <begin position="304"/>
        <end position="309"/>
    </location>
</feature>
<feature type="turn" evidence="20">
    <location>
        <begin position="324"/>
        <end position="327"/>
    </location>
</feature>
<feature type="turn" evidence="20">
    <location>
        <begin position="330"/>
        <end position="335"/>
    </location>
</feature>
<feature type="helix" evidence="20">
    <location>
        <begin position="342"/>
        <end position="357"/>
    </location>
</feature>
<feature type="helix" evidence="20">
    <location>
        <begin position="367"/>
        <end position="378"/>
    </location>
</feature>
<feature type="turn" evidence="20">
    <location>
        <begin position="383"/>
        <end position="385"/>
    </location>
</feature>
<feature type="helix" evidence="20">
    <location>
        <begin position="389"/>
        <end position="391"/>
    </location>
</feature>
<feature type="helix" evidence="20">
    <location>
        <begin position="393"/>
        <end position="397"/>
    </location>
</feature>
<feature type="helix" evidence="20">
    <location>
        <begin position="408"/>
        <end position="411"/>
    </location>
</feature>
<feature type="helix" evidence="20">
    <location>
        <begin position="417"/>
        <end position="426"/>
    </location>
</feature>
<feature type="helix" evidence="20">
    <location>
        <begin position="431"/>
        <end position="433"/>
    </location>
</feature>
<feature type="helix" evidence="20">
    <location>
        <begin position="437"/>
        <end position="441"/>
    </location>
</feature>
<feature type="helix" evidence="20">
    <location>
        <begin position="444"/>
        <end position="449"/>
    </location>
</feature>
<feature type="helix" evidence="20">
    <location>
        <begin position="452"/>
        <end position="455"/>
    </location>
</feature>
<feature type="helix" evidence="20">
    <location>
        <begin position="462"/>
        <end position="465"/>
    </location>
</feature>
<dbReference type="EC" id="2.7.11.22" evidence="7 8 9"/>
<dbReference type="EMBL" id="X66363">
    <property type="protein sequence ID" value="CAA47006.1"/>
    <property type="molecule type" value="mRNA"/>
</dbReference>
<dbReference type="EMBL" id="BT006827">
    <property type="protein sequence ID" value="AAP35473.1"/>
    <property type="molecule type" value="mRNA"/>
</dbReference>
<dbReference type="EMBL" id="AK290145">
    <property type="protein sequence ID" value="BAF82834.1"/>
    <property type="molecule type" value="mRNA"/>
</dbReference>
<dbReference type="EMBL" id="AK301832">
    <property type="protein sequence ID" value="BAH13564.1"/>
    <property type="molecule type" value="mRNA"/>
</dbReference>
<dbReference type="EMBL" id="AL096791">
    <property type="status" value="NOT_ANNOTATED_CDS"/>
    <property type="molecule type" value="Genomic_DNA"/>
</dbReference>
<dbReference type="EMBL" id="AL513366">
    <property type="status" value="NOT_ANNOTATED_CDS"/>
    <property type="molecule type" value="Genomic_DNA"/>
</dbReference>
<dbReference type="EMBL" id="CH471164">
    <property type="protein sequence ID" value="EAW59295.1"/>
    <property type="molecule type" value="Genomic_DNA"/>
</dbReference>
<dbReference type="EMBL" id="CH471164">
    <property type="protein sequence ID" value="EAW59297.1"/>
    <property type="molecule type" value="Genomic_DNA"/>
</dbReference>
<dbReference type="EMBL" id="BC001048">
    <property type="protein sequence ID" value="AAH01048.1"/>
    <property type="status" value="ALT_INIT"/>
    <property type="molecule type" value="mRNA"/>
</dbReference>
<dbReference type="EMBL" id="BC015607">
    <property type="protein sequence ID" value="AAH15607.1"/>
    <property type="status" value="ALT_INIT"/>
    <property type="molecule type" value="mRNA"/>
</dbReference>
<dbReference type="CCDS" id="CCDS14276.1">
    <molecule id="Q00536-1"/>
</dbReference>
<dbReference type="CCDS" id="CCDS48101.1">
    <molecule id="Q00536-3"/>
</dbReference>
<dbReference type="CCDS" id="CCDS55408.1">
    <molecule id="Q00536-2"/>
</dbReference>
<dbReference type="PIR" id="S23385">
    <property type="entry name" value="S23385"/>
</dbReference>
<dbReference type="RefSeq" id="NP_001163931.1">
    <molecule id="Q00536-2"/>
    <property type="nucleotide sequence ID" value="NM_001170460.2"/>
</dbReference>
<dbReference type="RefSeq" id="NP_006192.1">
    <molecule id="Q00536-1"/>
    <property type="nucleotide sequence ID" value="NM_006201.5"/>
</dbReference>
<dbReference type="RefSeq" id="NP_148978.2">
    <molecule id="Q00536-3"/>
    <property type="nucleotide sequence ID" value="NM_033018.4"/>
</dbReference>
<dbReference type="RefSeq" id="XP_016885059.1">
    <property type="nucleotide sequence ID" value="XM_017029570.1"/>
</dbReference>
<dbReference type="RefSeq" id="XP_016885060.1">
    <property type="nucleotide sequence ID" value="XM_017029571.1"/>
</dbReference>
<dbReference type="RefSeq" id="XP_016885061.1">
    <property type="nucleotide sequence ID" value="XM_017029572.1"/>
</dbReference>
<dbReference type="RefSeq" id="XP_016885062.1">
    <property type="nucleotide sequence ID" value="XM_017029573.1"/>
</dbReference>
<dbReference type="PDB" id="3MTL">
    <property type="method" value="X-ray"/>
    <property type="resolution" value="2.40 A"/>
    <property type="chains" value="A=163-478"/>
</dbReference>
<dbReference type="PDB" id="5G6V">
    <property type="method" value="X-ray"/>
    <property type="resolution" value="2.20 A"/>
    <property type="chains" value="A/B=163-478"/>
</dbReference>
<dbReference type="PDBsum" id="3MTL"/>
<dbReference type="PDBsum" id="5G6V"/>
<dbReference type="SMR" id="Q00536"/>
<dbReference type="BioGRID" id="111154">
    <property type="interactions" value="133"/>
</dbReference>
<dbReference type="ComplexPortal" id="CPX-379">
    <property type="entry name" value="Cyclin Y-CDK16 complex"/>
</dbReference>
<dbReference type="FunCoup" id="Q00536">
    <property type="interactions" value="800"/>
</dbReference>
<dbReference type="IntAct" id="Q00536">
    <property type="interactions" value="57"/>
</dbReference>
<dbReference type="MINT" id="Q00536"/>
<dbReference type="STRING" id="9606.ENSP00000276052"/>
<dbReference type="BindingDB" id="Q00536"/>
<dbReference type="ChEMBL" id="CHEMBL4597"/>
<dbReference type="DrugBank" id="DB07766">
    <property type="generic name" value="(2Z,3E)-2,3'-biindole-2',3(1H,1'H)-dione 3-{O-[(3R)-3,4-dihydroxybutyl]oxime}"/>
</dbReference>
<dbReference type="DrugBank" id="DB12010">
    <property type="generic name" value="Fostamatinib"/>
</dbReference>
<dbReference type="DrugCentral" id="Q00536"/>
<dbReference type="GlyGen" id="Q00536">
    <property type="glycosylation" value="1 site, 1 O-linked glycan (1 site)"/>
</dbReference>
<dbReference type="iPTMnet" id="Q00536"/>
<dbReference type="PhosphoSitePlus" id="Q00536"/>
<dbReference type="SwissPalm" id="Q00536"/>
<dbReference type="BioMuta" id="CDK16"/>
<dbReference type="DMDM" id="266425"/>
<dbReference type="CPTAC" id="non-CPTAC-2936"/>
<dbReference type="jPOST" id="Q00536"/>
<dbReference type="MassIVE" id="Q00536"/>
<dbReference type="PaxDb" id="9606-ENSP00000276052"/>
<dbReference type="PeptideAtlas" id="Q00536"/>
<dbReference type="ProteomicsDB" id="57854">
    <molecule id="Q00536-1"/>
</dbReference>
<dbReference type="Pumba" id="Q00536"/>
<dbReference type="Antibodypedia" id="374">
    <property type="antibodies" value="232 antibodies from 31 providers"/>
</dbReference>
<dbReference type="DNASU" id="5127"/>
<dbReference type="Ensembl" id="ENST00000276052.10">
    <molecule id="Q00536-2"/>
    <property type="protein sequence ID" value="ENSP00000276052.6"/>
    <property type="gene ID" value="ENSG00000102225.17"/>
</dbReference>
<dbReference type="Ensembl" id="ENST00000357227.9">
    <molecule id="Q00536-1"/>
    <property type="protein sequence ID" value="ENSP00000349762.4"/>
    <property type="gene ID" value="ENSG00000102225.17"/>
</dbReference>
<dbReference type="Ensembl" id="ENST00000457458.6">
    <molecule id="Q00536-3"/>
    <property type="protein sequence ID" value="ENSP00000405798.2"/>
    <property type="gene ID" value="ENSG00000102225.17"/>
</dbReference>
<dbReference type="Ensembl" id="ENST00000518022.5">
    <molecule id="Q00536-1"/>
    <property type="protein sequence ID" value="ENSP00000429751.1"/>
    <property type="gene ID" value="ENSG00000102225.17"/>
</dbReference>
<dbReference type="GeneID" id="5127"/>
<dbReference type="KEGG" id="hsa:5127"/>
<dbReference type="MANE-Select" id="ENST00000357227.9">
    <property type="protein sequence ID" value="ENSP00000349762.4"/>
    <property type="RefSeq nucleotide sequence ID" value="NM_006201.5"/>
    <property type="RefSeq protein sequence ID" value="NP_006192.1"/>
</dbReference>
<dbReference type="UCSC" id="uc004dho.4">
    <molecule id="Q00536-1"/>
    <property type="organism name" value="human"/>
</dbReference>
<dbReference type="AGR" id="HGNC:8749"/>
<dbReference type="CTD" id="5127"/>
<dbReference type="DisGeNET" id="5127"/>
<dbReference type="GeneCards" id="CDK16"/>
<dbReference type="HGNC" id="HGNC:8749">
    <property type="gene designation" value="CDK16"/>
</dbReference>
<dbReference type="HPA" id="ENSG00000102225">
    <property type="expression patterns" value="Low tissue specificity"/>
</dbReference>
<dbReference type="MalaCards" id="CDK16"/>
<dbReference type="MIM" id="311550">
    <property type="type" value="gene"/>
</dbReference>
<dbReference type="neXtProt" id="NX_Q00536"/>
<dbReference type="OpenTargets" id="ENSG00000102225"/>
<dbReference type="PharmGKB" id="PA33095"/>
<dbReference type="VEuPathDB" id="HostDB:ENSG00000102225"/>
<dbReference type="eggNOG" id="KOG0594">
    <property type="taxonomic scope" value="Eukaryota"/>
</dbReference>
<dbReference type="GeneTree" id="ENSGT00940000156963"/>
<dbReference type="InParanoid" id="Q00536"/>
<dbReference type="OrthoDB" id="1732493at2759"/>
<dbReference type="PAN-GO" id="Q00536">
    <property type="GO annotations" value="7 GO annotations based on evolutionary models"/>
</dbReference>
<dbReference type="PhylomeDB" id="Q00536"/>
<dbReference type="TreeFam" id="TF106508"/>
<dbReference type="BRENDA" id="2.7.11.22">
    <property type="organism ID" value="2681"/>
</dbReference>
<dbReference type="PathwayCommons" id="Q00536"/>
<dbReference type="SignaLink" id="Q00536"/>
<dbReference type="SIGNOR" id="Q00536"/>
<dbReference type="BioGRID-ORCS" id="5127">
    <property type="hits" value="14 hits in 819 CRISPR screens"/>
</dbReference>
<dbReference type="ChiTaRS" id="CDK16">
    <property type="organism name" value="human"/>
</dbReference>
<dbReference type="EvolutionaryTrace" id="Q00536"/>
<dbReference type="GeneWiki" id="PCTK1"/>
<dbReference type="GenomeRNAi" id="5127"/>
<dbReference type="Pharos" id="Q00536">
    <property type="development level" value="Tchem"/>
</dbReference>
<dbReference type="PRO" id="PR:Q00536"/>
<dbReference type="Proteomes" id="UP000005640">
    <property type="component" value="Chromosome X"/>
</dbReference>
<dbReference type="RNAct" id="Q00536">
    <property type="molecule type" value="protein"/>
</dbReference>
<dbReference type="Bgee" id="ENSG00000102225">
    <property type="expression patterns" value="Expressed in right hemisphere of cerebellum and 195 other cell types or tissues"/>
</dbReference>
<dbReference type="ExpressionAtlas" id="Q00536">
    <property type="expression patterns" value="baseline and differential"/>
</dbReference>
<dbReference type="GO" id="GO:0000307">
    <property type="term" value="C:cyclin-dependent protein kinase holoenzyme complex"/>
    <property type="evidence" value="ECO:0000353"/>
    <property type="project" value="ComplexPortal"/>
</dbReference>
<dbReference type="GO" id="GO:0005737">
    <property type="term" value="C:cytoplasm"/>
    <property type="evidence" value="ECO:0000314"/>
    <property type="project" value="UniProtKB"/>
</dbReference>
<dbReference type="GO" id="GO:0009898">
    <property type="term" value="C:cytoplasmic side of plasma membrane"/>
    <property type="evidence" value="ECO:0000314"/>
    <property type="project" value="UniProtKB"/>
</dbReference>
<dbReference type="GO" id="GO:0005829">
    <property type="term" value="C:cytosol"/>
    <property type="evidence" value="ECO:0000314"/>
    <property type="project" value="HPA"/>
</dbReference>
<dbReference type="GO" id="GO:0015630">
    <property type="term" value="C:microtubule cytoskeleton"/>
    <property type="evidence" value="ECO:0000314"/>
    <property type="project" value="HPA"/>
</dbReference>
<dbReference type="GO" id="GO:0043005">
    <property type="term" value="C:neuron projection"/>
    <property type="evidence" value="ECO:0007669"/>
    <property type="project" value="UniProtKB-KW"/>
</dbReference>
<dbReference type="GO" id="GO:0005634">
    <property type="term" value="C:nucleus"/>
    <property type="evidence" value="ECO:0000318"/>
    <property type="project" value="GO_Central"/>
</dbReference>
<dbReference type="GO" id="GO:0005886">
    <property type="term" value="C:plasma membrane"/>
    <property type="evidence" value="ECO:0000314"/>
    <property type="project" value="HPA"/>
</dbReference>
<dbReference type="GO" id="GO:0008021">
    <property type="term" value="C:synaptic vesicle"/>
    <property type="evidence" value="ECO:0007669"/>
    <property type="project" value="Ensembl"/>
</dbReference>
<dbReference type="GO" id="GO:0005524">
    <property type="term" value="F:ATP binding"/>
    <property type="evidence" value="ECO:0007669"/>
    <property type="project" value="UniProtKB-KW"/>
</dbReference>
<dbReference type="GO" id="GO:0004693">
    <property type="term" value="F:cyclin-dependent protein serine/threonine kinase activity"/>
    <property type="evidence" value="ECO:0000318"/>
    <property type="project" value="GO_Central"/>
</dbReference>
<dbReference type="GO" id="GO:0106310">
    <property type="term" value="F:protein serine kinase activity"/>
    <property type="evidence" value="ECO:0007669"/>
    <property type="project" value="RHEA"/>
</dbReference>
<dbReference type="GO" id="GO:0004674">
    <property type="term" value="F:protein serine/threonine kinase activity"/>
    <property type="evidence" value="ECO:0000314"/>
    <property type="project" value="UniProtKB"/>
</dbReference>
<dbReference type="GO" id="GO:0006887">
    <property type="term" value="P:exocytosis"/>
    <property type="evidence" value="ECO:0000250"/>
    <property type="project" value="UniProtKB"/>
</dbReference>
<dbReference type="GO" id="GO:0030252">
    <property type="term" value="P:growth hormone secretion"/>
    <property type="evidence" value="ECO:0000250"/>
    <property type="project" value="UniProtKB"/>
</dbReference>
<dbReference type="GO" id="GO:0031175">
    <property type="term" value="P:neuron projection development"/>
    <property type="evidence" value="ECO:0000250"/>
    <property type="project" value="UniProtKB"/>
</dbReference>
<dbReference type="GO" id="GO:0010508">
    <property type="term" value="P:positive regulation of autophagy"/>
    <property type="evidence" value="ECO:0000314"/>
    <property type="project" value="ComplexPortal"/>
</dbReference>
<dbReference type="GO" id="GO:0006468">
    <property type="term" value="P:protein phosphorylation"/>
    <property type="evidence" value="ECO:0000304"/>
    <property type="project" value="ProtInc"/>
</dbReference>
<dbReference type="GO" id="GO:1901987">
    <property type="term" value="P:regulation of cell cycle phase transition"/>
    <property type="evidence" value="ECO:0000318"/>
    <property type="project" value="GO_Central"/>
</dbReference>
<dbReference type="GO" id="GO:0061178">
    <property type="term" value="P:regulation of insulin secretion involved in cellular response to glucose stimulus"/>
    <property type="evidence" value="ECO:0000315"/>
    <property type="project" value="UniProtKB"/>
</dbReference>
<dbReference type="GO" id="GO:0007283">
    <property type="term" value="P:spermatogenesis"/>
    <property type="evidence" value="ECO:0000250"/>
    <property type="project" value="UniProtKB"/>
</dbReference>
<dbReference type="CDD" id="cd07873">
    <property type="entry name" value="STKc_PCTAIRE1"/>
    <property type="match status" value="1"/>
</dbReference>
<dbReference type="FunFam" id="3.30.200.20:FF:000007">
    <property type="entry name" value="Cyclin-dependent kinase 14, putative"/>
    <property type="match status" value="1"/>
</dbReference>
<dbReference type="FunFam" id="1.10.510.10:FF:000061">
    <property type="entry name" value="Putative cyclin-dependent kinase 17"/>
    <property type="match status" value="1"/>
</dbReference>
<dbReference type="Gene3D" id="3.30.200.20">
    <property type="entry name" value="Phosphorylase Kinase, domain 1"/>
    <property type="match status" value="1"/>
</dbReference>
<dbReference type="Gene3D" id="1.10.510.10">
    <property type="entry name" value="Transferase(Phosphotransferase) domain 1"/>
    <property type="match status" value="1"/>
</dbReference>
<dbReference type="InterPro" id="IPR050108">
    <property type="entry name" value="CDK"/>
</dbReference>
<dbReference type="InterPro" id="IPR011009">
    <property type="entry name" value="Kinase-like_dom_sf"/>
</dbReference>
<dbReference type="InterPro" id="IPR000719">
    <property type="entry name" value="Prot_kinase_dom"/>
</dbReference>
<dbReference type="InterPro" id="IPR017441">
    <property type="entry name" value="Protein_kinase_ATP_BS"/>
</dbReference>
<dbReference type="InterPro" id="IPR008271">
    <property type="entry name" value="Ser/Thr_kinase_AS"/>
</dbReference>
<dbReference type="PANTHER" id="PTHR24056">
    <property type="entry name" value="CELL DIVISION PROTEIN KINASE"/>
    <property type="match status" value="1"/>
</dbReference>
<dbReference type="PANTHER" id="PTHR24056:SF174">
    <property type="entry name" value="CYCLIN-DEPENDENT KINASE 16"/>
    <property type="match status" value="1"/>
</dbReference>
<dbReference type="Pfam" id="PF00069">
    <property type="entry name" value="Pkinase"/>
    <property type="match status" value="1"/>
</dbReference>
<dbReference type="SMART" id="SM00220">
    <property type="entry name" value="S_TKc"/>
    <property type="match status" value="1"/>
</dbReference>
<dbReference type="SUPFAM" id="SSF56112">
    <property type="entry name" value="Protein kinase-like (PK-like)"/>
    <property type="match status" value="1"/>
</dbReference>
<dbReference type="PROSITE" id="PS00107">
    <property type="entry name" value="PROTEIN_KINASE_ATP"/>
    <property type="match status" value="1"/>
</dbReference>
<dbReference type="PROSITE" id="PS50011">
    <property type="entry name" value="PROTEIN_KINASE_DOM"/>
    <property type="match status" value="1"/>
</dbReference>
<dbReference type="PROSITE" id="PS00108">
    <property type="entry name" value="PROTEIN_KINASE_ST"/>
    <property type="match status" value="1"/>
</dbReference>
<comment type="function">
    <text evidence="1 7 8 9">Protein kinase that plays a role in vesicle-mediated transport processes and exocytosis. Regulates GH1 release by brain neurons. Phosphorylates NSF, and thereby regulates NSF oligomerization. Required for normal spermatogenesis. Regulates neuron differentiation and dendrite development (By similarity). Plays a role in the regulation of insulin secretion in response to changes in blood glucose levels. Can phosphorylate CCNY at 'Ser-336' (in vitro).</text>
</comment>
<comment type="catalytic activity">
    <reaction evidence="7 8 9">
        <text>L-seryl-[protein] + ATP = O-phospho-L-seryl-[protein] + ADP + H(+)</text>
        <dbReference type="Rhea" id="RHEA:17989"/>
        <dbReference type="Rhea" id="RHEA-COMP:9863"/>
        <dbReference type="Rhea" id="RHEA-COMP:11604"/>
        <dbReference type="ChEBI" id="CHEBI:15378"/>
        <dbReference type="ChEBI" id="CHEBI:29999"/>
        <dbReference type="ChEBI" id="CHEBI:30616"/>
        <dbReference type="ChEBI" id="CHEBI:83421"/>
        <dbReference type="ChEBI" id="CHEBI:456216"/>
        <dbReference type="EC" id="2.7.11.22"/>
    </reaction>
</comment>
<comment type="catalytic activity">
    <reaction evidence="7 8 9">
        <text>L-threonyl-[protein] + ATP = O-phospho-L-threonyl-[protein] + ADP + H(+)</text>
        <dbReference type="Rhea" id="RHEA:46608"/>
        <dbReference type="Rhea" id="RHEA-COMP:11060"/>
        <dbReference type="Rhea" id="RHEA-COMP:11605"/>
        <dbReference type="ChEBI" id="CHEBI:15378"/>
        <dbReference type="ChEBI" id="CHEBI:30013"/>
        <dbReference type="ChEBI" id="CHEBI:30616"/>
        <dbReference type="ChEBI" id="CHEBI:61977"/>
        <dbReference type="ChEBI" id="CHEBI:456216"/>
        <dbReference type="EC" id="2.7.11.22"/>
    </reaction>
</comment>
<comment type="subunit">
    <text evidence="2 7 8 9">Found in a complex containing CABLES1, CDK17 and TDRD7. Interacts with BRSK2. Identified in a complex with NSF, syntaxin-1, synaptotagmin, SYN1, SYP and CDK5R1 (By similarity). Interacts with YWHAH, YWHAQ and YWHAZ. Interacts with CCNY; this interaction increases the CDK16 kinase activity (By similarity). Interacts with CCNYL1; this interaction mutually increases the stability of CDK16 and CCNYL1 and increases the kinase activity of CDK16 (By similarity). Interacts with NSF (By similarity).</text>
</comment>
<comment type="interaction">
    <interactant intactId="EBI-726261">
        <id>Q00536</id>
    </interactant>
    <interactant intactId="EBI-743771">
        <id>Q92624</id>
        <label>APPBP2</label>
    </interactant>
    <organismsDiffer>false</organismsDiffer>
    <experiments>3</experiments>
</comment>
<comment type="interaction">
    <interactant intactId="EBI-726261">
        <id>Q00536</id>
    </interactant>
    <interactant intactId="EBI-1049189">
        <id>Q8ND76</id>
        <label>CCNY</label>
    </interactant>
    <organismsDiffer>false</organismsDiffer>
    <experiments>3</experiments>
</comment>
<comment type="interaction">
    <interactant intactId="EBI-726261">
        <id>Q00536</id>
    </interactant>
    <interactant intactId="EBI-11615526">
        <id>Q8ND76-1</id>
        <label>CCNY</label>
    </interactant>
    <organismsDiffer>false</organismsDiffer>
    <experiments>7</experiments>
</comment>
<comment type="interaction">
    <interactant intactId="EBI-726261">
        <id>Q00536</id>
    </interactant>
    <interactant intactId="EBI-10103094">
        <id>Q8N7R7</id>
        <label>CCNYL1</label>
    </interactant>
    <organismsDiffer>false</organismsDiffer>
    <experiments>7</experiments>
</comment>
<comment type="interaction">
    <interactant intactId="EBI-726261">
        <id>Q00536</id>
    </interactant>
    <interactant intactId="EBI-624648">
        <id>Q00537</id>
        <label>CDK17</label>
    </interactant>
    <organismsDiffer>false</organismsDiffer>
    <experiments>5</experiments>
</comment>
<comment type="interaction">
    <interactant intactId="EBI-726261">
        <id>Q00536</id>
    </interactant>
    <interactant intactId="EBI-81088">
        <id>Q15436</id>
        <label>SEC23A</label>
    </interactant>
    <organismsDiffer>false</organismsDiffer>
    <experiments>3</experiments>
</comment>
<comment type="interaction">
    <interactant intactId="EBI-726261">
        <id>Q00536</id>
    </interactant>
    <interactant intactId="EBI-356498">
        <id>P62258</id>
        <label>YWHAE</label>
    </interactant>
    <organismsDiffer>false</organismsDiffer>
    <experiments>5</experiments>
</comment>
<comment type="interaction">
    <interactant intactId="EBI-726261">
        <id>Q00536</id>
    </interactant>
    <interactant intactId="EBI-347088">
        <id>P63104</id>
        <label>YWHAZ</label>
    </interactant>
    <organismsDiffer>false</organismsDiffer>
    <experiments>3</experiments>
</comment>
<comment type="interaction">
    <interactant intactId="EBI-726261">
        <id>Q00536</id>
    </interactant>
    <interactant intactId="EBI-10176632">
        <id>O43829</id>
        <label>ZBTB14</label>
    </interactant>
    <organismsDiffer>false</organismsDiffer>
    <experiments>3</experiments>
</comment>
<comment type="interaction">
    <interactant intactId="EBI-12401765">
        <id>Q00536-3</id>
    </interactant>
    <interactant intactId="EBI-375013">
        <id>P30281</id>
        <label>CCND3</label>
    </interactant>
    <organismsDiffer>false</organismsDiffer>
    <experiments>3</experiments>
</comment>
<comment type="interaction">
    <interactant intactId="EBI-12401765">
        <id>Q00536-3</id>
    </interactant>
    <interactant intactId="EBI-10176632">
        <id>O43829</id>
        <label>ZBTB14</label>
    </interactant>
    <organismsDiffer>false</organismsDiffer>
    <experiments>3</experiments>
</comment>
<comment type="subcellular location">
    <subcellularLocation>
        <location evidence="9">Cytoplasm</location>
    </subcellularLocation>
    <subcellularLocation>
        <location evidence="3">Cytoplasmic vesicle</location>
        <location evidence="3">Secretory vesicle</location>
    </subcellularLocation>
    <subcellularLocation>
        <location evidence="7">Cell membrane</location>
        <topology evidence="7">Peripheral membrane protein</topology>
        <orientation evidence="7">Cytoplasmic side</orientation>
    </subcellularLocation>
    <subcellularLocation>
        <location evidence="3">Synapse</location>
        <location evidence="3">Synaptosome</location>
    </subcellularLocation>
    <text>Colocalizes with insulin in pancreas islets. Recruited to the cell membrane by CCNY.</text>
</comment>
<comment type="alternative products">
    <event type="alternative splicing"/>
    <isoform>
        <id>Q00536-1</id>
        <name>1</name>
        <sequence type="displayed"/>
    </isoform>
    <isoform>
        <id>Q00536-2</id>
        <name>2</name>
        <sequence type="described" ref="VSP_046134"/>
    </isoform>
    <isoform>
        <id>Q00536-3</id>
        <name>3</name>
        <sequence type="described" ref="VSP_046342"/>
    </isoform>
</comment>
<comment type="tissue specificity">
    <text evidence="9">Detected in pancreas islets (at protein level). Detected in brain and pancreas.</text>
</comment>
<comment type="PTM">
    <text evidence="2 9">Phosphorylation of CDK16 is essential for the binding of CCNY, but also essential for the regulation of CDK16 kinase activity (PubMed:22798068). Phosphorylation of CDK16 is essential for the binding of CCNYl1, but also essential for the regulation of CDK16 kinase activity (By similarity). Ser-146 and Ser-153 are the most critical sites for the binding of CCNYL1 and for modulating CDK16 kinase activity (By similarity). Phosphorylation at Ser-153 inhibits kinase activity (PubMed:22798068).</text>
</comment>
<comment type="similarity">
    <text evidence="12">Belongs to the protein kinase superfamily. CMGC Ser/Thr protein kinase family. CDC2/CDKX subfamily.</text>
</comment>
<comment type="sequence caution" evidence="12">
    <conflict type="erroneous initiation">
        <sequence resource="EMBL-CDS" id="AAH01048"/>
    </conflict>
    <text>Truncated N-terminus.</text>
</comment>
<comment type="sequence caution" evidence="12">
    <conflict type="erroneous initiation">
        <sequence resource="EMBL-CDS" id="AAH15607"/>
    </conflict>
    <text>Truncated N-terminus.</text>
</comment>
<name>CDK16_HUMAN</name>
<accession>Q00536</accession>
<accession>A8K280</accession>
<accession>B7Z7C8</accession>
<accession>J3KN74</accession>
<accession>J3KQP7</accession>
<organism>
    <name type="scientific">Homo sapiens</name>
    <name type="common">Human</name>
    <dbReference type="NCBI Taxonomy" id="9606"/>
    <lineage>
        <taxon>Eukaryota</taxon>
        <taxon>Metazoa</taxon>
        <taxon>Chordata</taxon>
        <taxon>Craniata</taxon>
        <taxon>Vertebrata</taxon>
        <taxon>Euteleostomi</taxon>
        <taxon>Mammalia</taxon>
        <taxon>Eutheria</taxon>
        <taxon>Euarchontoglires</taxon>
        <taxon>Primates</taxon>
        <taxon>Haplorrhini</taxon>
        <taxon>Catarrhini</taxon>
        <taxon>Hominidae</taxon>
        <taxon>Homo</taxon>
    </lineage>
</organism>
<keyword id="KW-0002">3D-structure</keyword>
<keyword id="KW-0025">Alternative splicing</keyword>
<keyword id="KW-0067">ATP-binding</keyword>
<keyword id="KW-1003">Cell membrane</keyword>
<keyword id="KW-0963">Cytoplasm</keyword>
<keyword id="KW-0968">Cytoplasmic vesicle</keyword>
<keyword id="KW-0221">Differentiation</keyword>
<keyword id="KW-0418">Kinase</keyword>
<keyword id="KW-0472">Membrane</keyword>
<keyword id="KW-0547">Nucleotide-binding</keyword>
<keyword id="KW-0597">Phosphoprotein</keyword>
<keyword id="KW-1267">Proteomics identification</keyword>
<keyword id="KW-1185">Reference proteome</keyword>
<keyword id="KW-0723">Serine/threonine-protein kinase</keyword>
<keyword id="KW-0744">Spermatogenesis</keyword>
<keyword id="KW-0770">Synapse</keyword>
<keyword id="KW-0771">Synaptosome</keyword>
<keyword id="KW-0808">Transferase</keyword>
<gene>
    <name type="primary">CDK16</name>
    <name type="synonym">PCTAIRE1</name>
    <name type="synonym">PCTK1</name>
</gene>
<evidence type="ECO:0000250" key="1"/>
<evidence type="ECO:0000250" key="2">
    <source>
        <dbReference type="UniProtKB" id="Q04735"/>
    </source>
</evidence>
<evidence type="ECO:0000250" key="3">
    <source>
        <dbReference type="UniProtKB" id="Q63686"/>
    </source>
</evidence>
<evidence type="ECO:0000255" key="4">
    <source>
        <dbReference type="PROSITE-ProRule" id="PRU00159"/>
    </source>
</evidence>
<evidence type="ECO:0000255" key="5">
    <source>
        <dbReference type="PROSITE-ProRule" id="PRU10027"/>
    </source>
</evidence>
<evidence type="ECO:0000256" key="6">
    <source>
        <dbReference type="SAM" id="MobiDB-lite"/>
    </source>
</evidence>
<evidence type="ECO:0000269" key="7">
    <source>
    </source>
</evidence>
<evidence type="ECO:0000269" key="8">
    <source>
    </source>
</evidence>
<evidence type="ECO:0000269" key="9">
    <source>
    </source>
</evidence>
<evidence type="ECO:0000303" key="10">
    <source>
    </source>
</evidence>
<evidence type="ECO:0000303" key="11">
    <source>
    </source>
</evidence>
<evidence type="ECO:0000305" key="12"/>
<evidence type="ECO:0007744" key="13">
    <source>
    </source>
</evidence>
<evidence type="ECO:0007744" key="14">
    <source>
    </source>
</evidence>
<evidence type="ECO:0007744" key="15">
    <source>
    </source>
</evidence>
<evidence type="ECO:0007744" key="16">
    <source>
    </source>
</evidence>
<evidence type="ECO:0007744" key="17">
    <source>
    </source>
</evidence>
<evidence type="ECO:0007744" key="18">
    <source>
    </source>
</evidence>
<evidence type="ECO:0007829" key="19">
    <source>
        <dbReference type="PDB" id="3MTL"/>
    </source>
</evidence>
<evidence type="ECO:0007829" key="20">
    <source>
        <dbReference type="PDB" id="5G6V"/>
    </source>
</evidence>
<protein>
    <recommendedName>
        <fullName>Cyclin-dependent kinase 16</fullName>
        <ecNumber evidence="7 8 9">2.7.11.22</ecNumber>
    </recommendedName>
    <alternativeName>
        <fullName>Cell division protein kinase 16</fullName>
    </alternativeName>
    <alternativeName>
        <fullName>PCTAIRE-motif protein kinase 1</fullName>
    </alternativeName>
    <alternativeName>
        <fullName>Serine/threonine-protein kinase PCTAIRE-1</fullName>
    </alternativeName>
</protein>